<organism>
    <name type="scientific">Moorella thermoacetica (strain ATCC 39073 / JCM 9320)</name>
    <dbReference type="NCBI Taxonomy" id="264732"/>
    <lineage>
        <taxon>Bacteria</taxon>
        <taxon>Bacillati</taxon>
        <taxon>Bacillota</taxon>
        <taxon>Clostridia</taxon>
        <taxon>Moorellales</taxon>
        <taxon>Moorellaceae</taxon>
        <taxon>Moorella</taxon>
    </lineage>
</organism>
<feature type="chain" id="PRO_0000073314" description="ATP synthase gamma chain">
    <location>
        <begin position="1"/>
        <end position="282"/>
    </location>
</feature>
<feature type="sequence conflict" description="In Ref. 1; AAB51465." evidence="3" ref="1">
    <original>A</original>
    <variation>G</variation>
    <location>
        <position position="42"/>
    </location>
</feature>
<feature type="sequence conflict" description="In Ref. 1; AAB51465." evidence="3" ref="1">
    <original>Y</original>
    <variation>N</variation>
    <location>
        <position position="169"/>
    </location>
</feature>
<feature type="sequence conflict" description="In Ref. 1; AAB51465." evidence="3" ref="1">
    <original>A</original>
    <variation>P</variation>
    <location>
        <position position="175"/>
    </location>
</feature>
<feature type="sequence conflict" description="In Ref. 1; AAB51465." evidence="3" ref="1">
    <original>A</original>
    <variation>G</variation>
    <location>
        <position position="208"/>
    </location>
</feature>
<protein>
    <recommendedName>
        <fullName evidence="1">ATP synthase gamma chain</fullName>
    </recommendedName>
    <alternativeName>
        <fullName evidence="1">ATP synthase F1 sector gamma subunit</fullName>
    </alternativeName>
    <alternativeName>
        <fullName evidence="1">F-ATPase gamma subunit</fullName>
    </alternativeName>
</protein>
<comment type="function">
    <text>Produces ATP from ADP in the presence of a proton gradient across the membrane. The gamma chain is believed to be important in regulating ATPase activity and the flow of protons through the CF(0) complex.</text>
</comment>
<comment type="subunit">
    <text evidence="1 2">F-type ATPases have 2 components, CF(1) - the catalytic core - and CF(0) - the membrane proton channel. CF(1) has five subunits: alpha(3), beta(3), gamma(1), delta(1), epsilon(1). CF(0) has three main subunits: a, b and c (By similarity). In this bacterium the a and b subunits are transcribed but do not seem to be translated, thus the ATP synthase consists of the alpha, beta, gamma, delta, epsilon and c subunits.</text>
</comment>
<comment type="subcellular location">
    <subcellularLocation>
        <location>Cell membrane</location>
        <topology>Peripheral membrane protein</topology>
    </subcellularLocation>
</comment>
<comment type="similarity">
    <text evidence="1">Belongs to the ATPase gamma chain family.</text>
</comment>
<dbReference type="EMBL" id="U64318">
    <property type="protein sequence ID" value="AAB51465.1"/>
    <property type="molecule type" value="Genomic_DNA"/>
</dbReference>
<dbReference type="EMBL" id="CP000232">
    <property type="protein sequence ID" value="ABC20661.1"/>
    <property type="molecule type" value="Genomic_DNA"/>
</dbReference>
<dbReference type="RefSeq" id="YP_431204.1">
    <property type="nucleotide sequence ID" value="NC_007644.1"/>
</dbReference>
<dbReference type="SMR" id="O05432"/>
<dbReference type="STRING" id="264732.Moth_2379"/>
<dbReference type="EnsemblBacteria" id="ABC20661">
    <property type="protein sequence ID" value="ABC20661"/>
    <property type="gene ID" value="Moth_2379"/>
</dbReference>
<dbReference type="KEGG" id="mta:Moth_2379"/>
<dbReference type="PATRIC" id="fig|264732.11.peg.2592"/>
<dbReference type="eggNOG" id="COG0224">
    <property type="taxonomic scope" value="Bacteria"/>
</dbReference>
<dbReference type="HOGENOM" id="CLU_050669_0_1_9"/>
<dbReference type="OrthoDB" id="9812769at2"/>
<dbReference type="GO" id="GO:0005886">
    <property type="term" value="C:plasma membrane"/>
    <property type="evidence" value="ECO:0007669"/>
    <property type="project" value="UniProtKB-SubCell"/>
</dbReference>
<dbReference type="GO" id="GO:0045259">
    <property type="term" value="C:proton-transporting ATP synthase complex"/>
    <property type="evidence" value="ECO:0007669"/>
    <property type="project" value="UniProtKB-KW"/>
</dbReference>
<dbReference type="GO" id="GO:0005524">
    <property type="term" value="F:ATP binding"/>
    <property type="evidence" value="ECO:0007669"/>
    <property type="project" value="UniProtKB-UniRule"/>
</dbReference>
<dbReference type="GO" id="GO:0046933">
    <property type="term" value="F:proton-transporting ATP synthase activity, rotational mechanism"/>
    <property type="evidence" value="ECO:0007669"/>
    <property type="project" value="UniProtKB-UniRule"/>
</dbReference>
<dbReference type="GO" id="GO:0042777">
    <property type="term" value="P:proton motive force-driven plasma membrane ATP synthesis"/>
    <property type="evidence" value="ECO:0007669"/>
    <property type="project" value="UniProtKB-UniRule"/>
</dbReference>
<dbReference type="CDD" id="cd12151">
    <property type="entry name" value="F1-ATPase_gamma"/>
    <property type="match status" value="1"/>
</dbReference>
<dbReference type="FunFam" id="1.10.287.80:FF:000001">
    <property type="entry name" value="ATP synthase gamma chain"/>
    <property type="match status" value="1"/>
</dbReference>
<dbReference type="FunFam" id="3.40.1380.10:FF:000006">
    <property type="entry name" value="ATP synthase gamma chain"/>
    <property type="match status" value="1"/>
</dbReference>
<dbReference type="Gene3D" id="3.40.1380.10">
    <property type="match status" value="1"/>
</dbReference>
<dbReference type="Gene3D" id="1.10.287.80">
    <property type="entry name" value="ATP synthase, gamma subunit, helix hairpin domain"/>
    <property type="match status" value="1"/>
</dbReference>
<dbReference type="HAMAP" id="MF_00815">
    <property type="entry name" value="ATP_synth_gamma_bact"/>
    <property type="match status" value="1"/>
</dbReference>
<dbReference type="InterPro" id="IPR035968">
    <property type="entry name" value="ATP_synth_F1_ATPase_gsu"/>
</dbReference>
<dbReference type="InterPro" id="IPR000131">
    <property type="entry name" value="ATP_synth_F1_gsu"/>
</dbReference>
<dbReference type="InterPro" id="IPR023632">
    <property type="entry name" value="ATP_synth_F1_gsu_CS"/>
</dbReference>
<dbReference type="NCBIfam" id="TIGR01146">
    <property type="entry name" value="ATPsyn_F1gamma"/>
    <property type="match status" value="1"/>
</dbReference>
<dbReference type="PANTHER" id="PTHR11693">
    <property type="entry name" value="ATP SYNTHASE GAMMA CHAIN"/>
    <property type="match status" value="1"/>
</dbReference>
<dbReference type="PANTHER" id="PTHR11693:SF22">
    <property type="entry name" value="ATP SYNTHASE SUBUNIT GAMMA, MITOCHONDRIAL"/>
    <property type="match status" value="1"/>
</dbReference>
<dbReference type="Pfam" id="PF00231">
    <property type="entry name" value="ATP-synt"/>
    <property type="match status" value="1"/>
</dbReference>
<dbReference type="PRINTS" id="PR00126">
    <property type="entry name" value="ATPASEGAMMA"/>
</dbReference>
<dbReference type="SUPFAM" id="SSF52943">
    <property type="entry name" value="ATP synthase (F1-ATPase), gamma subunit"/>
    <property type="match status" value="1"/>
</dbReference>
<dbReference type="PROSITE" id="PS00153">
    <property type="entry name" value="ATPASE_GAMMA"/>
    <property type="match status" value="1"/>
</dbReference>
<name>ATPG_MOOTA</name>
<evidence type="ECO:0000255" key="1">
    <source>
        <dbReference type="HAMAP-Rule" id="MF_00815"/>
    </source>
</evidence>
<evidence type="ECO:0000269" key="2">
    <source>
    </source>
</evidence>
<evidence type="ECO:0000305" key="3"/>
<proteinExistence type="evidence at protein level"/>
<accession>O05432</accession>
<accession>Q2RFX8</accession>
<sequence>MAHMRDLKRRIRSVQSTQHITRAMKMVAAAKLRKAQAQVTAARPYAAKLEEVVGRLMAAVDPETQPLAATREVKKAGYVLITADRGLAGGYNANLIRLTEERLREEGRPAALVAVGRKGRDFFRRRPVEIVKSFTDIGDNPELIQARELARQLVTMYLEGTLDEVNLIYTRFYSAIRQVPMVERLLPIATPREKKDTGDYIYEPSPEAVLRVLLPRYCEIKVYRALLEAKASEHGARMTAMDNATKNAAEMIDKFTLSFNRARQAAITNEIVEIVAGADALK</sequence>
<reference key="1">
    <citation type="journal article" date="1997" name="J. Bacteriol.">
        <title>Composition and primary structure of the F1F0 ATP synthase from the obligately anaerobic bacterium Clostridium thermoaceticum.</title>
        <authorList>
            <person name="Das A."/>
            <person name="Ljungdahl L.G."/>
        </authorList>
    </citation>
    <scope>NUCLEOTIDE SEQUENCE [GENOMIC DNA]</scope>
    <scope>SUBUNIT</scope>
    <scope>OPERON STRUCTURE</scope>
</reference>
<reference key="2">
    <citation type="journal article" date="2008" name="Environ. Microbiol.">
        <title>The complete genome sequence of Moorella thermoacetica (f. Clostridium thermoaceticum).</title>
        <authorList>
            <person name="Pierce E."/>
            <person name="Xie G."/>
            <person name="Barabote R.D."/>
            <person name="Saunders E."/>
            <person name="Han C.S."/>
            <person name="Detter J.C."/>
            <person name="Richardson P."/>
            <person name="Brettin T.S."/>
            <person name="Das A."/>
            <person name="Ljungdahl L.G."/>
            <person name="Ragsdale S.W."/>
        </authorList>
    </citation>
    <scope>NUCLEOTIDE SEQUENCE [LARGE SCALE GENOMIC DNA]</scope>
    <source>
        <strain>ATCC 39073 / JCM 9320</strain>
    </source>
</reference>
<gene>
    <name evidence="1" type="primary">atpG</name>
    <name type="ordered locus">Moth_2379</name>
</gene>
<keyword id="KW-0066">ATP synthesis</keyword>
<keyword id="KW-1003">Cell membrane</keyword>
<keyword id="KW-0139">CF(1)</keyword>
<keyword id="KW-0375">Hydrogen ion transport</keyword>
<keyword id="KW-0406">Ion transport</keyword>
<keyword id="KW-0472">Membrane</keyword>
<keyword id="KW-0813">Transport</keyword>